<accession>Q8RM03</accession>
<accession>Q8L3A6</accession>
<name>ACXB_XANP2</name>
<proteinExistence type="evidence at protein level"/>
<reference evidence="3 4" key="1">
    <citation type="journal article" date="2002" name="J. Bacteriol.">
        <title>Biochemical, molecular, and genetic analyses of the acetone carboxylases from Xanthobacter autotrophicus strain Py2 and Rhodobacter capsulatus strain B10.</title>
        <authorList>
            <person name="Sluis M.K."/>
            <person name="Larsen R.A."/>
            <person name="Krum J.G."/>
            <person name="Anderson R."/>
            <person name="Metcalf W.W."/>
            <person name="Ensign S.A."/>
        </authorList>
    </citation>
    <scope>NUCLEOTIDE SEQUENCE [GENOMIC DNA]</scope>
    <scope>IDENTIFICATION</scope>
    <scope>BLOCKAGE OF N-TERMINUS</scope>
</reference>
<reference evidence="5" key="2">
    <citation type="submission" date="2007-07" db="EMBL/GenBank/DDBJ databases">
        <title>Complete sequence of chromosome of Xanthobacter autotrophicus Py2.</title>
        <authorList>
            <consortium name="US DOE Joint Genome Institute"/>
            <person name="Copeland A."/>
            <person name="Lucas S."/>
            <person name="Lapidus A."/>
            <person name="Barry K."/>
            <person name="Glavina del Rio T."/>
            <person name="Hammon N."/>
            <person name="Israni S."/>
            <person name="Dalin E."/>
            <person name="Tice H."/>
            <person name="Pitluck S."/>
            <person name="Sims D."/>
            <person name="Brettin T."/>
            <person name="Bruce D."/>
            <person name="Detter J.C."/>
            <person name="Han C."/>
            <person name="Tapia R."/>
            <person name="Brainard J."/>
            <person name="Schmutz J."/>
            <person name="Larimer F."/>
            <person name="Land M."/>
            <person name="Hauser L."/>
            <person name="Kyrpides N."/>
            <person name="Kim E."/>
            <person name="Ensigns S.A."/>
            <person name="Richardson P."/>
        </authorList>
    </citation>
    <scope>NUCLEOTIDE SEQUENCE [LARGE SCALE GENOMIC DNA]</scope>
    <source>
        <strain>ATCC BAA-1158 / Py2</strain>
    </source>
</reference>
<reference evidence="3" key="3">
    <citation type="journal article" date="1997" name="Proc. Natl. Acad. Sci. U.S.A.">
        <title>Purification and characterization of acetone carboxylase from Xanthobacter strain Py2.</title>
        <authorList>
            <person name="Sluis M.K."/>
            <person name="Ensign S.A."/>
        </authorList>
    </citation>
    <scope>FUNCTION</scope>
    <scope>CATALYTIC ACTIVITY</scope>
    <scope>COFACTOR</scope>
    <scope>BIOPHYSICOCHEMICAL PROPERTIES</scope>
    <scope>SUBUNIT</scope>
    <scope>MASS SPECTROMETRY</scope>
</reference>
<feature type="chain" id="PRO_0000403052" description="Acetone carboxylase alpha subunit">
    <location>
        <begin position="1"/>
        <end position="776"/>
    </location>
</feature>
<feature type="sequence conflict" description="In Ref. 1; AAM20737." evidence="3" ref="1">
    <original>AT</original>
    <variation>QA</variation>
    <location>
        <begin position="13"/>
        <end position="14"/>
    </location>
</feature>
<feature type="strand" evidence="7">
    <location>
        <begin position="16"/>
        <end position="18"/>
    </location>
</feature>
<feature type="helix" evidence="6">
    <location>
        <begin position="24"/>
        <end position="38"/>
    </location>
</feature>
<feature type="helix" evidence="6">
    <location>
        <begin position="41"/>
        <end position="43"/>
    </location>
</feature>
<feature type="helix" evidence="6">
    <location>
        <begin position="48"/>
        <end position="52"/>
    </location>
</feature>
<feature type="helix" evidence="6">
    <location>
        <begin position="54"/>
        <end position="75"/>
    </location>
</feature>
<feature type="helix" evidence="6">
    <location>
        <begin position="76"/>
        <end position="78"/>
    </location>
</feature>
<feature type="helix" evidence="6">
    <location>
        <begin position="82"/>
        <end position="85"/>
    </location>
</feature>
<feature type="strand" evidence="6">
    <location>
        <begin position="90"/>
        <end position="95"/>
    </location>
</feature>
<feature type="strand" evidence="6">
    <location>
        <begin position="101"/>
        <end position="104"/>
    </location>
</feature>
<feature type="strand" evidence="6">
    <location>
        <begin position="106"/>
        <end position="108"/>
    </location>
</feature>
<feature type="helix" evidence="6">
    <location>
        <begin position="111"/>
        <end position="124"/>
    </location>
</feature>
<feature type="turn" evidence="6">
    <location>
        <begin position="125"/>
        <end position="131"/>
    </location>
</feature>
<feature type="strand" evidence="6">
    <location>
        <begin position="138"/>
        <end position="141"/>
    </location>
</feature>
<feature type="helix" evidence="6">
    <location>
        <begin position="144"/>
        <end position="146"/>
    </location>
</feature>
<feature type="strand" evidence="6">
    <location>
        <begin position="153"/>
        <end position="162"/>
    </location>
</feature>
<feature type="strand" evidence="6">
    <location>
        <begin position="165"/>
        <end position="175"/>
    </location>
</feature>
<feature type="strand" evidence="7">
    <location>
        <begin position="177"/>
        <end position="179"/>
    </location>
</feature>
<feature type="strand" evidence="6">
    <location>
        <begin position="182"/>
        <end position="187"/>
    </location>
</feature>
<feature type="strand" evidence="6">
    <location>
        <begin position="203"/>
        <end position="208"/>
    </location>
</feature>
<feature type="helix" evidence="6">
    <location>
        <begin position="214"/>
        <end position="222"/>
    </location>
</feature>
<feature type="strand" evidence="6">
    <location>
        <begin position="223"/>
        <end position="225"/>
    </location>
</feature>
<feature type="helix" evidence="6">
    <location>
        <begin position="227"/>
        <end position="255"/>
    </location>
</feature>
<feature type="helix" evidence="6">
    <location>
        <begin position="257"/>
        <end position="282"/>
    </location>
</feature>
<feature type="strand" evidence="6">
    <location>
        <begin position="286"/>
        <end position="297"/>
    </location>
</feature>
<feature type="helix" evidence="6">
    <location>
        <begin position="308"/>
        <end position="310"/>
    </location>
</feature>
<feature type="strand" evidence="6">
    <location>
        <begin position="312"/>
        <end position="324"/>
    </location>
</feature>
<feature type="strand" evidence="6">
    <location>
        <begin position="330"/>
        <end position="333"/>
    </location>
</feature>
<feature type="strand" evidence="6">
    <location>
        <begin position="342"/>
        <end position="344"/>
    </location>
</feature>
<feature type="helix" evidence="6">
    <location>
        <begin position="349"/>
        <end position="361"/>
    </location>
</feature>
<feature type="turn" evidence="6">
    <location>
        <begin position="362"/>
        <end position="364"/>
    </location>
</feature>
<feature type="helix" evidence="6">
    <location>
        <begin position="373"/>
        <end position="376"/>
    </location>
</feature>
<feature type="strand" evidence="6">
    <location>
        <begin position="378"/>
        <end position="381"/>
    </location>
</feature>
<feature type="turn" evidence="6">
    <location>
        <begin position="398"/>
        <end position="400"/>
    </location>
</feature>
<feature type="helix" evidence="6">
    <location>
        <begin position="401"/>
        <end position="422"/>
    </location>
</feature>
<feature type="helix" evidence="6">
    <location>
        <begin position="425"/>
        <end position="427"/>
    </location>
</feature>
<feature type="strand" evidence="6">
    <location>
        <begin position="440"/>
        <end position="444"/>
    </location>
</feature>
<feature type="strand" evidence="6">
    <location>
        <begin position="448"/>
        <end position="454"/>
    </location>
</feature>
<feature type="helix" evidence="6">
    <location>
        <begin position="456"/>
        <end position="459"/>
    </location>
</feature>
<feature type="strand" evidence="6">
    <location>
        <begin position="467"/>
        <end position="469"/>
    </location>
</feature>
<feature type="strand" evidence="6">
    <location>
        <begin position="480"/>
        <end position="482"/>
    </location>
</feature>
<feature type="helix" evidence="6">
    <location>
        <begin position="488"/>
        <end position="494"/>
    </location>
</feature>
<feature type="strand" evidence="6">
    <location>
        <begin position="495"/>
        <end position="504"/>
    </location>
</feature>
<feature type="strand" evidence="6">
    <location>
        <begin position="512"/>
        <end position="514"/>
    </location>
</feature>
<feature type="strand" evidence="6">
    <location>
        <begin position="520"/>
        <end position="526"/>
    </location>
</feature>
<feature type="strand" evidence="6">
    <location>
        <begin position="530"/>
        <end position="535"/>
    </location>
</feature>
<feature type="strand" evidence="8">
    <location>
        <begin position="548"/>
        <end position="550"/>
    </location>
</feature>
<feature type="strand" evidence="6">
    <location>
        <begin position="559"/>
        <end position="564"/>
    </location>
</feature>
<feature type="helix" evidence="6">
    <location>
        <begin position="567"/>
        <end position="573"/>
    </location>
</feature>
<feature type="helix" evidence="6">
    <location>
        <begin position="591"/>
        <end position="593"/>
    </location>
</feature>
<feature type="strand" evidence="6">
    <location>
        <begin position="598"/>
        <end position="603"/>
    </location>
</feature>
<feature type="strand" evidence="6">
    <location>
        <begin position="610"/>
        <end position="612"/>
    </location>
</feature>
<feature type="strand" evidence="6">
    <location>
        <begin position="617"/>
        <end position="621"/>
    </location>
</feature>
<feature type="helix" evidence="6">
    <location>
        <begin position="631"/>
        <end position="633"/>
    </location>
</feature>
<feature type="helix" evidence="6">
    <location>
        <begin position="636"/>
        <end position="644"/>
    </location>
</feature>
<feature type="helix" evidence="6">
    <location>
        <begin position="652"/>
        <end position="657"/>
    </location>
</feature>
<feature type="strand" evidence="6">
    <location>
        <begin position="661"/>
        <end position="663"/>
    </location>
</feature>
<feature type="strand" evidence="6">
    <location>
        <begin position="669"/>
        <end position="671"/>
    </location>
</feature>
<feature type="helix" evidence="6">
    <location>
        <begin position="673"/>
        <end position="690"/>
    </location>
</feature>
<feature type="helix" evidence="6">
    <location>
        <begin position="694"/>
        <end position="706"/>
    </location>
</feature>
<feature type="helix" evidence="6">
    <location>
        <begin position="712"/>
        <end position="724"/>
    </location>
</feature>
<feature type="helix" evidence="6">
    <location>
        <begin position="726"/>
        <end position="735"/>
    </location>
</feature>
<feature type="helix" evidence="6">
    <location>
        <begin position="746"/>
        <end position="748"/>
    </location>
</feature>
<feature type="strand" evidence="6">
    <location>
        <begin position="749"/>
        <end position="751"/>
    </location>
</feature>
<feature type="helix" evidence="6">
    <location>
        <begin position="762"/>
        <end position="764"/>
    </location>
</feature>
<protein>
    <recommendedName>
        <fullName evidence="4">Acetone carboxylase alpha subunit</fullName>
        <ecNumber>6.4.1.6</ecNumber>
    </recommendedName>
</protein>
<sequence>MNVTVDQSTLAGATRGIVRGGETLKEHRDRLMAATKATGRYAGLKTLELREREPILYNKLFSRLRAGVVDARETAKKIAASPIVEQEGELCFTLYNAAGDSLLTSTGIIIHVGTMGAAIKYMIENNWEANPGVHDKDIFCNNDSLIGNVHPCDIHTIVPIFWEGELIGWVGGVTHVIDTGAVGPGSMATGQVQRFGDGYSITCRKVGANDTLFRDWLHESQRMVRTTRYWMLDERTRIAGCHMIRKLVEEVVAEEGIEAYWKFAYEAVEHGRLGLQARIKAMTIPGTYRQVGFVDVPYAHEDVRVPSDFAKLDTIMHAPCEMTIRRDGTWRLDFEGSSRWGWHTYNAHQVSFTSGIWVMMTQTLIPSEMINDGAAYGTEFRLPKGTWMNPDDRRVAFSYSWHFLVSAWTALWRGLSRSYFGRGYLEEVNAGNANTSNWLQGGGFNQYDEIHAVNSFECAANGTGATAVQDGLSHAAAIWNPEGDMGDMEIWELAEPLVYLGRQIKASSGGSGKYRGGCGFESLRMVWNAKDWTMFFMGNGHISSDWGLMGGYPAASGYRFAAHKTNLKELIASGAEIPLGGDTDPENPTWDAMLPDAQIKRDKQAITTEEMFSDYDLYLNYMRGGPGFGDPLDREPQAVADDINGGYVLERFAGEVYGVVVRKGADGQYGVDEAGTAAARAQIRKDRLAKSVPVSEWMKGEREKILAKDAGTQVRQMFAASFKLGPRFEKDFRTFWSLPDSWTLPEEEIGVPTYGSRYSMDISELPDVHTVQFVEE</sequence>
<gene>
    <name evidence="4" type="primary">acxB</name>
    <name type="ordered locus">Xaut_3510</name>
</gene>
<evidence type="ECO:0000269" key="1">
    <source>
    </source>
</evidence>
<evidence type="ECO:0000269" key="2">
    <source>
    </source>
</evidence>
<evidence type="ECO:0000305" key="3"/>
<evidence type="ECO:0000312" key="4">
    <source>
        <dbReference type="EMBL" id="AAL17711.1"/>
    </source>
</evidence>
<evidence type="ECO:0000312" key="5">
    <source>
        <dbReference type="EMBL" id="ABS68739.1"/>
    </source>
</evidence>
<evidence type="ECO:0007829" key="6">
    <source>
        <dbReference type="PDB" id="5M45"/>
    </source>
</evidence>
<evidence type="ECO:0007829" key="7">
    <source>
        <dbReference type="PDB" id="5SVB"/>
    </source>
</evidence>
<evidence type="ECO:0007829" key="8">
    <source>
        <dbReference type="PDB" id="5SVC"/>
    </source>
</evidence>
<keyword id="KW-0002">3D-structure</keyword>
<keyword id="KW-0067">ATP-binding</keyword>
<keyword id="KW-0436">Ligase</keyword>
<keyword id="KW-0547">Nucleotide-binding</keyword>
<keyword id="KW-1185">Reference proteome</keyword>
<dbReference type="EC" id="6.4.1.6"/>
<dbReference type="EMBL" id="AF251789">
    <property type="protein sequence ID" value="AAM20737.1"/>
    <property type="molecule type" value="Genomic_DNA"/>
</dbReference>
<dbReference type="EMBL" id="AY055852">
    <property type="protein sequence ID" value="AAL17711.1"/>
    <property type="molecule type" value="Genomic_DNA"/>
</dbReference>
<dbReference type="EMBL" id="CP000781">
    <property type="protein sequence ID" value="ABS68739.1"/>
    <property type="molecule type" value="Genomic_DNA"/>
</dbReference>
<dbReference type="PDB" id="5M45">
    <property type="method" value="X-ray"/>
    <property type="resolution" value="1.87 A"/>
    <property type="chains" value="A/D/G/J=1-776"/>
</dbReference>
<dbReference type="PDB" id="5SVB">
    <property type="method" value="X-ray"/>
    <property type="resolution" value="2.65 A"/>
    <property type="chains" value="A/D=1-776"/>
</dbReference>
<dbReference type="PDB" id="5SVC">
    <property type="method" value="X-ray"/>
    <property type="resolution" value="2.70 A"/>
    <property type="chains" value="A/D=1-776"/>
</dbReference>
<dbReference type="PDBsum" id="5M45"/>
<dbReference type="PDBsum" id="5SVB"/>
<dbReference type="PDBsum" id="5SVC"/>
<dbReference type="SMR" id="Q8RM03"/>
<dbReference type="STRING" id="78245.Xaut_3510"/>
<dbReference type="KEGG" id="xau:Xaut_3510"/>
<dbReference type="eggNOG" id="COG0146">
    <property type="taxonomic scope" value="Bacteria"/>
</dbReference>
<dbReference type="HOGENOM" id="CLU_020413_2_0_5"/>
<dbReference type="OrthoDB" id="9761586at2"/>
<dbReference type="PhylomeDB" id="Q8RM03"/>
<dbReference type="BioCyc" id="MetaCyc:MONOMER-13282"/>
<dbReference type="Proteomes" id="UP000002417">
    <property type="component" value="Chromosome"/>
</dbReference>
<dbReference type="GO" id="GO:0018710">
    <property type="term" value="F:acetone carboxylase activity"/>
    <property type="evidence" value="ECO:0000314"/>
    <property type="project" value="UniProtKB"/>
</dbReference>
<dbReference type="GO" id="GO:0005524">
    <property type="term" value="F:ATP binding"/>
    <property type="evidence" value="ECO:0007669"/>
    <property type="project" value="UniProtKB-KW"/>
</dbReference>
<dbReference type="GO" id="GO:0140977">
    <property type="term" value="P:cellular detoxification of acetone"/>
    <property type="evidence" value="ECO:0000314"/>
    <property type="project" value="UniProtKB"/>
</dbReference>
<dbReference type="InterPro" id="IPR003692">
    <property type="entry name" value="Hydantoinase_B"/>
</dbReference>
<dbReference type="Pfam" id="PF02538">
    <property type="entry name" value="Hydantoinase_B"/>
    <property type="match status" value="1"/>
</dbReference>
<organism>
    <name type="scientific">Xanthobacter autotrophicus (strain ATCC BAA-1158 / Py2)</name>
    <dbReference type="NCBI Taxonomy" id="78245"/>
    <lineage>
        <taxon>Bacteria</taxon>
        <taxon>Pseudomonadati</taxon>
        <taxon>Pseudomonadota</taxon>
        <taxon>Alphaproteobacteria</taxon>
        <taxon>Hyphomicrobiales</taxon>
        <taxon>Xanthobacteraceae</taxon>
        <taxon>Xanthobacter</taxon>
    </lineage>
</organism>
<comment type="function">
    <text evidence="2">Catalyzes the carboxylation of acetone to form acetoacetate. Has a reduced activity on butanone, and no activity on 2-pentatone, 3-pentatone, 2-hexanone, chloroacetone, pyruvate, phosphoenolpyruvate, acetaldehyde, propionaldehyde and propylene oxide.</text>
</comment>
<comment type="catalytic activity">
    <reaction evidence="2">
        <text>acetone + hydrogencarbonate + 2 ATP + 3 H2O = acetoacetate + 2 AMP + 4 phosphate + 4 H(+)</text>
        <dbReference type="Rhea" id="RHEA:18385"/>
        <dbReference type="ChEBI" id="CHEBI:13705"/>
        <dbReference type="ChEBI" id="CHEBI:15347"/>
        <dbReference type="ChEBI" id="CHEBI:15377"/>
        <dbReference type="ChEBI" id="CHEBI:15378"/>
        <dbReference type="ChEBI" id="CHEBI:17544"/>
        <dbReference type="ChEBI" id="CHEBI:30616"/>
        <dbReference type="ChEBI" id="CHEBI:43474"/>
        <dbReference type="ChEBI" id="CHEBI:456215"/>
        <dbReference type="EC" id="6.4.1.6"/>
    </reaction>
</comment>
<comment type="cofactor">
    <cofactor evidence="2">
        <name>Fe cation</name>
        <dbReference type="ChEBI" id="CHEBI:24875"/>
    </cofactor>
</comment>
<comment type="cofactor">
    <cofactor evidence="2">
        <name>Mg(2+)</name>
        <dbReference type="ChEBI" id="CHEBI:18420"/>
    </cofactor>
</comment>
<comment type="cofactor">
    <cofactor evidence="2">
        <name>Zn(2+)</name>
        <dbReference type="ChEBI" id="CHEBI:29105"/>
    </cofactor>
    <text evidence="2">Zn(2+). The heterohexamer contains tightly bound iron, manganese and zinc ions.</text>
</comment>
<comment type="biophysicochemical properties">
    <kinetics>
        <KM evidence="2">7.8 uM for acetone (in the presence of CO(2))</KM>
        <KM evidence="2">7.68 uM for acetone (in the absence of CO(2))</KM>
        <KM evidence="2">0.122 mM for ATP</KM>
        <KM evidence="2">4.17 mM for CO(2)</KM>
        <Vmax evidence="2">0.485 umol/min/mg enzyme toward acetone (in the presence of CO(2))</Vmax>
        <Vmax evidence="2">0.616 umol/min/mg enzyme toward acetone (in the absence of CO(2))</Vmax>
        <Vmax evidence="2">0.463 umol/min/mg enzyme toward ATP</Vmax>
        <Vmax evidence="2">0.225 umol/min/mg enzyme toward CO(2)</Vmax>
    </kinetics>
    <phDependence>
        <text evidence="2">Optimum pH is 7.6.</text>
    </phDependence>
</comment>
<comment type="subunit">
    <text evidence="2">Heterohexamer of two alpha, two beta and two gamma subunits.</text>
</comment>
<comment type="PTM">
    <text evidence="1">The N-terminus is blocked.</text>
</comment>
<comment type="mass spectrometry"/>
<comment type="similarity">
    <text evidence="3">Belongs to the oxoprolinase family.</text>
</comment>